<dbReference type="EC" id="6.3.2.1" evidence="1"/>
<dbReference type="EMBL" id="CP000440">
    <property type="protein sequence ID" value="ABI88045.1"/>
    <property type="molecule type" value="Genomic_DNA"/>
</dbReference>
<dbReference type="RefSeq" id="WP_011657658.1">
    <property type="nucleotide sequence ID" value="NZ_CP009798.1"/>
</dbReference>
<dbReference type="SMR" id="Q0BCS8"/>
<dbReference type="GeneID" id="93085305"/>
<dbReference type="KEGG" id="bam:Bamb_2489"/>
<dbReference type="PATRIC" id="fig|339670.21.peg.2422"/>
<dbReference type="eggNOG" id="COG0414">
    <property type="taxonomic scope" value="Bacteria"/>
</dbReference>
<dbReference type="UniPathway" id="UPA00028">
    <property type="reaction ID" value="UER00005"/>
</dbReference>
<dbReference type="Proteomes" id="UP000000662">
    <property type="component" value="Chromosome 1"/>
</dbReference>
<dbReference type="GO" id="GO:0005829">
    <property type="term" value="C:cytosol"/>
    <property type="evidence" value="ECO:0007669"/>
    <property type="project" value="TreeGrafter"/>
</dbReference>
<dbReference type="GO" id="GO:0005524">
    <property type="term" value="F:ATP binding"/>
    <property type="evidence" value="ECO:0007669"/>
    <property type="project" value="UniProtKB-KW"/>
</dbReference>
<dbReference type="GO" id="GO:0004592">
    <property type="term" value="F:pantoate-beta-alanine ligase activity"/>
    <property type="evidence" value="ECO:0007669"/>
    <property type="project" value="UniProtKB-UniRule"/>
</dbReference>
<dbReference type="GO" id="GO:0015940">
    <property type="term" value="P:pantothenate biosynthetic process"/>
    <property type="evidence" value="ECO:0007669"/>
    <property type="project" value="UniProtKB-UniRule"/>
</dbReference>
<dbReference type="CDD" id="cd00560">
    <property type="entry name" value="PanC"/>
    <property type="match status" value="1"/>
</dbReference>
<dbReference type="Gene3D" id="3.40.50.620">
    <property type="entry name" value="HUPs"/>
    <property type="match status" value="1"/>
</dbReference>
<dbReference type="Gene3D" id="3.30.1300.10">
    <property type="entry name" value="Pantoate-beta-alanine ligase, C-terminal domain"/>
    <property type="match status" value="1"/>
</dbReference>
<dbReference type="HAMAP" id="MF_00158">
    <property type="entry name" value="PanC"/>
    <property type="match status" value="1"/>
</dbReference>
<dbReference type="InterPro" id="IPR004821">
    <property type="entry name" value="Cyt_trans-like"/>
</dbReference>
<dbReference type="InterPro" id="IPR003721">
    <property type="entry name" value="Pantoate_ligase"/>
</dbReference>
<dbReference type="InterPro" id="IPR042176">
    <property type="entry name" value="Pantoate_ligase_C"/>
</dbReference>
<dbReference type="InterPro" id="IPR014729">
    <property type="entry name" value="Rossmann-like_a/b/a_fold"/>
</dbReference>
<dbReference type="NCBIfam" id="TIGR00125">
    <property type="entry name" value="cyt_tran_rel"/>
    <property type="match status" value="1"/>
</dbReference>
<dbReference type="NCBIfam" id="TIGR00018">
    <property type="entry name" value="panC"/>
    <property type="match status" value="1"/>
</dbReference>
<dbReference type="PANTHER" id="PTHR21299">
    <property type="entry name" value="CYTIDYLATE KINASE/PANTOATE-BETA-ALANINE LIGASE"/>
    <property type="match status" value="1"/>
</dbReference>
<dbReference type="PANTHER" id="PTHR21299:SF1">
    <property type="entry name" value="PANTOATE--BETA-ALANINE LIGASE"/>
    <property type="match status" value="1"/>
</dbReference>
<dbReference type="Pfam" id="PF02569">
    <property type="entry name" value="Pantoate_ligase"/>
    <property type="match status" value="1"/>
</dbReference>
<dbReference type="SUPFAM" id="SSF52374">
    <property type="entry name" value="Nucleotidylyl transferase"/>
    <property type="match status" value="1"/>
</dbReference>
<comment type="function">
    <text evidence="1">Catalyzes the condensation of pantoate with beta-alanine in an ATP-dependent reaction via a pantoyl-adenylate intermediate.</text>
</comment>
<comment type="catalytic activity">
    <reaction evidence="1">
        <text>(R)-pantoate + beta-alanine + ATP = (R)-pantothenate + AMP + diphosphate + H(+)</text>
        <dbReference type="Rhea" id="RHEA:10912"/>
        <dbReference type="ChEBI" id="CHEBI:15378"/>
        <dbReference type="ChEBI" id="CHEBI:15980"/>
        <dbReference type="ChEBI" id="CHEBI:29032"/>
        <dbReference type="ChEBI" id="CHEBI:30616"/>
        <dbReference type="ChEBI" id="CHEBI:33019"/>
        <dbReference type="ChEBI" id="CHEBI:57966"/>
        <dbReference type="ChEBI" id="CHEBI:456215"/>
        <dbReference type="EC" id="6.3.2.1"/>
    </reaction>
</comment>
<comment type="pathway">
    <text evidence="1">Cofactor biosynthesis; (R)-pantothenate biosynthesis; (R)-pantothenate from (R)-pantoate and beta-alanine: step 1/1.</text>
</comment>
<comment type="subunit">
    <text evidence="1">Homodimer.</text>
</comment>
<comment type="subcellular location">
    <subcellularLocation>
        <location evidence="1">Cytoplasm</location>
    </subcellularLocation>
</comment>
<comment type="miscellaneous">
    <text evidence="1">The reaction proceeds by a bi uni uni bi ping pong mechanism.</text>
</comment>
<comment type="similarity">
    <text evidence="1">Belongs to the pantothenate synthetase family.</text>
</comment>
<proteinExistence type="inferred from homology"/>
<keyword id="KW-0067">ATP-binding</keyword>
<keyword id="KW-0963">Cytoplasm</keyword>
<keyword id="KW-0436">Ligase</keyword>
<keyword id="KW-0547">Nucleotide-binding</keyword>
<keyword id="KW-0566">Pantothenate biosynthesis</keyword>
<gene>
    <name evidence="1" type="primary">panC</name>
    <name type="ordered locus">Bamb_2489</name>
</gene>
<feature type="chain" id="PRO_0000305414" description="Pantothenate synthetase">
    <location>
        <begin position="1"/>
        <end position="279"/>
    </location>
</feature>
<feature type="active site" description="Proton donor" evidence="1">
    <location>
        <position position="33"/>
    </location>
</feature>
<feature type="binding site" evidence="1">
    <location>
        <begin position="26"/>
        <end position="33"/>
    </location>
    <ligand>
        <name>ATP</name>
        <dbReference type="ChEBI" id="CHEBI:30616"/>
    </ligand>
</feature>
<feature type="binding site" evidence="1">
    <location>
        <position position="57"/>
    </location>
    <ligand>
        <name>(R)-pantoate</name>
        <dbReference type="ChEBI" id="CHEBI:15980"/>
    </ligand>
</feature>
<feature type="binding site" evidence="1">
    <location>
        <position position="57"/>
    </location>
    <ligand>
        <name>beta-alanine</name>
        <dbReference type="ChEBI" id="CHEBI:57966"/>
    </ligand>
</feature>
<feature type="binding site" evidence="1">
    <location>
        <begin position="144"/>
        <end position="147"/>
    </location>
    <ligand>
        <name>ATP</name>
        <dbReference type="ChEBI" id="CHEBI:30616"/>
    </ligand>
</feature>
<feature type="binding site" evidence="1">
    <location>
        <position position="150"/>
    </location>
    <ligand>
        <name>(R)-pantoate</name>
        <dbReference type="ChEBI" id="CHEBI:15980"/>
    </ligand>
</feature>
<feature type="binding site" evidence="1">
    <location>
        <position position="173"/>
    </location>
    <ligand>
        <name>ATP</name>
        <dbReference type="ChEBI" id="CHEBI:30616"/>
    </ligand>
</feature>
<feature type="binding site" evidence="1">
    <location>
        <begin position="181"/>
        <end position="184"/>
    </location>
    <ligand>
        <name>ATP</name>
        <dbReference type="ChEBI" id="CHEBI:30616"/>
    </ligand>
</feature>
<sequence>MKVISSIQELRDQLRGQNRTAFVPTMGNLHEGHLSLMRLARQHGDPVVASIFVNRLQFGPNEDFDKYPRTLQDDIEKLQKENVYVLFAPTERDMYPEPQEYRVLPPDDLGGILEGEFRPGFFAGVCTVVTKLMSCVQPRVAVFGKKDYQQLMIVRRMCQQLALPVDIIAAETVRDEDGLALSSRNRYLTTDERKEAPELAKTLQRVRDGVLGGERDLGKLEQTARAHLAERGWAPDYISIRRRANLIAPSAAELEAGEPLVVLAAAKLGATRLIDNLEI</sequence>
<protein>
    <recommendedName>
        <fullName evidence="1">Pantothenate synthetase</fullName>
        <shortName evidence="1">PS</shortName>
        <ecNumber evidence="1">6.3.2.1</ecNumber>
    </recommendedName>
    <alternativeName>
        <fullName evidence="1">Pantoate--beta-alanine ligase</fullName>
    </alternativeName>
    <alternativeName>
        <fullName evidence="1">Pantoate-activating enzyme</fullName>
    </alternativeName>
</protein>
<reference key="1">
    <citation type="submission" date="2006-08" db="EMBL/GenBank/DDBJ databases">
        <title>Complete sequence of chromosome 1 of Burkholderia cepacia AMMD.</title>
        <authorList>
            <person name="Copeland A."/>
            <person name="Lucas S."/>
            <person name="Lapidus A."/>
            <person name="Barry K."/>
            <person name="Detter J.C."/>
            <person name="Glavina del Rio T."/>
            <person name="Hammon N."/>
            <person name="Israni S."/>
            <person name="Pitluck S."/>
            <person name="Bruce D."/>
            <person name="Chain P."/>
            <person name="Malfatti S."/>
            <person name="Shin M."/>
            <person name="Vergez L."/>
            <person name="Schmutz J."/>
            <person name="Larimer F."/>
            <person name="Land M."/>
            <person name="Hauser L."/>
            <person name="Kyrpides N."/>
            <person name="Kim E."/>
            <person name="Parke J."/>
            <person name="Coenye T."/>
            <person name="Konstantinidis K."/>
            <person name="Ramette A."/>
            <person name="Tiedje J."/>
            <person name="Richardson P."/>
        </authorList>
    </citation>
    <scope>NUCLEOTIDE SEQUENCE [LARGE SCALE GENOMIC DNA]</scope>
    <source>
        <strain>ATCC BAA-244 / DSM 16087 / CCUG 44356 / LMG 19182 / AMMD</strain>
    </source>
</reference>
<evidence type="ECO:0000255" key="1">
    <source>
        <dbReference type="HAMAP-Rule" id="MF_00158"/>
    </source>
</evidence>
<name>PANC_BURCM</name>
<organism>
    <name type="scientific">Burkholderia ambifaria (strain ATCC BAA-244 / DSM 16087 / CCUG 44356 / LMG 19182 / AMMD)</name>
    <name type="common">Burkholderia cepacia (strain AMMD)</name>
    <dbReference type="NCBI Taxonomy" id="339670"/>
    <lineage>
        <taxon>Bacteria</taxon>
        <taxon>Pseudomonadati</taxon>
        <taxon>Pseudomonadota</taxon>
        <taxon>Betaproteobacteria</taxon>
        <taxon>Burkholderiales</taxon>
        <taxon>Burkholderiaceae</taxon>
        <taxon>Burkholderia</taxon>
        <taxon>Burkholderia cepacia complex</taxon>
    </lineage>
</organism>
<accession>Q0BCS8</accession>